<dbReference type="EMBL" id="L42023">
    <property type="protein sequence ID" value="AAC22083.1"/>
    <property type="molecule type" value="Genomic_DNA"/>
</dbReference>
<dbReference type="PIR" id="E64007">
    <property type="entry name" value="E64007"/>
</dbReference>
<dbReference type="EnsemblBacteria" id="AAC22083">
    <property type="protein sequence ID" value="AAC22083"/>
    <property type="gene ID" value="HI_0421"/>
</dbReference>
<dbReference type="KEGG" id="hin:HI_0421"/>
<dbReference type="HOGENOM" id="CLU_3043976_0_0_6"/>
<dbReference type="Proteomes" id="UP000000579">
    <property type="component" value="Chromosome"/>
</dbReference>
<name>Y421_HAEIN</name>
<keyword id="KW-1185">Reference proteome</keyword>
<reference key="1">
    <citation type="journal article" date="1995" name="Science">
        <title>Whole-genome random sequencing and assembly of Haemophilus influenzae Rd.</title>
        <authorList>
            <person name="Fleischmann R.D."/>
            <person name="Adams M.D."/>
            <person name="White O."/>
            <person name="Clayton R.A."/>
            <person name="Kirkness E.F."/>
            <person name="Kerlavage A.R."/>
            <person name="Bult C.J."/>
            <person name="Tomb J.-F."/>
            <person name="Dougherty B.A."/>
            <person name="Merrick J.M."/>
            <person name="McKenney K."/>
            <person name="Sutton G.G."/>
            <person name="FitzHugh W."/>
            <person name="Fields C.A."/>
            <person name="Gocayne J.D."/>
            <person name="Scott J.D."/>
            <person name="Shirley R."/>
            <person name="Liu L.-I."/>
            <person name="Glodek A."/>
            <person name="Kelley J.M."/>
            <person name="Weidman J.F."/>
            <person name="Phillips C.A."/>
            <person name="Spriggs T."/>
            <person name="Hedblom E."/>
            <person name="Cotton M.D."/>
            <person name="Utterback T.R."/>
            <person name="Hanna M.C."/>
            <person name="Nguyen D.T."/>
            <person name="Saudek D.M."/>
            <person name="Brandon R.C."/>
            <person name="Fine L.D."/>
            <person name="Fritchman J.L."/>
            <person name="Fuhrmann J.L."/>
            <person name="Geoghagen N.S.M."/>
            <person name="Gnehm C.L."/>
            <person name="McDonald L.A."/>
            <person name="Small K.V."/>
            <person name="Fraser C.M."/>
            <person name="Smith H.O."/>
            <person name="Venter J.C."/>
        </authorList>
    </citation>
    <scope>NUCLEOTIDE SEQUENCE [LARGE SCALE GENOMIC DNA]</scope>
    <source>
        <strain>ATCC 51907 / DSM 11121 / KW20 / Rd</strain>
    </source>
</reference>
<feature type="chain" id="PRO_0000077922" description="Uncharacterized protein HI_0421">
    <location>
        <begin position="1"/>
        <end position="54"/>
    </location>
</feature>
<gene>
    <name type="ordered locus">HI_0421</name>
</gene>
<sequence>MASAIRNFPYPCFWKFVSMANRPIKTAGILGYGTPLLIRSFGISVIGIDNADKV</sequence>
<protein>
    <recommendedName>
        <fullName>Uncharacterized protein HI_0421</fullName>
    </recommendedName>
</protein>
<proteinExistence type="predicted"/>
<accession>P43996</accession>
<organism>
    <name type="scientific">Haemophilus influenzae (strain ATCC 51907 / DSM 11121 / KW20 / Rd)</name>
    <dbReference type="NCBI Taxonomy" id="71421"/>
    <lineage>
        <taxon>Bacteria</taxon>
        <taxon>Pseudomonadati</taxon>
        <taxon>Pseudomonadota</taxon>
        <taxon>Gammaproteobacteria</taxon>
        <taxon>Pasteurellales</taxon>
        <taxon>Pasteurellaceae</taxon>
        <taxon>Haemophilus</taxon>
    </lineage>
</organism>